<reference key="1">
    <citation type="submission" date="2007-03" db="EMBL/GenBank/DDBJ databases">
        <title>Sequencing analysis of Aethionema grandiflorum chloroplast DNA.</title>
        <authorList>
            <person name="Hosouchi T."/>
            <person name="Tsuruoka H."/>
            <person name="Kotani H."/>
        </authorList>
    </citation>
    <scope>NUCLEOTIDE SEQUENCE [LARGE SCALE GENOMIC DNA]</scope>
</reference>
<accession>A4QJK4</accession>
<organism>
    <name type="scientific">Aethionema grandiflorum</name>
    <name type="common">Persian stone-cress</name>
    <dbReference type="NCBI Taxonomy" id="72657"/>
    <lineage>
        <taxon>Eukaryota</taxon>
        <taxon>Viridiplantae</taxon>
        <taxon>Streptophyta</taxon>
        <taxon>Embryophyta</taxon>
        <taxon>Tracheophyta</taxon>
        <taxon>Spermatophyta</taxon>
        <taxon>Magnoliopsida</taxon>
        <taxon>eudicotyledons</taxon>
        <taxon>Gunneridae</taxon>
        <taxon>Pentapetalae</taxon>
        <taxon>rosids</taxon>
        <taxon>malvids</taxon>
        <taxon>Brassicales</taxon>
        <taxon>Brassicaceae</taxon>
        <taxon>Aethionemeae</taxon>
        <taxon>Aethionema</taxon>
    </lineage>
</organism>
<evidence type="ECO:0000255" key="1">
    <source>
        <dbReference type="HAMAP-Rule" id="MF_01394"/>
    </source>
</evidence>
<proteinExistence type="inferred from homology"/>
<protein>
    <recommendedName>
        <fullName evidence="1">NAD(P)H-quinone oxidoreductase subunit 3, chloroplastic</fullName>
        <ecNumber evidence="1">7.1.1.-</ecNumber>
    </recommendedName>
    <alternativeName>
        <fullName evidence="1">NAD(P)H dehydrogenase subunit 3</fullName>
    </alternativeName>
    <alternativeName>
        <fullName evidence="1">NADH-plastoquinone oxidoreductase subunit 3</fullName>
    </alternativeName>
</protein>
<name>NU3C_AETGR</name>
<gene>
    <name evidence="1" type="primary">ndhC</name>
</gene>
<dbReference type="EC" id="7.1.1.-" evidence="1"/>
<dbReference type="EMBL" id="AP009367">
    <property type="protein sequence ID" value="BAF49859.1"/>
    <property type="molecule type" value="Genomic_DNA"/>
</dbReference>
<dbReference type="RefSeq" id="YP_001123035.1">
    <property type="nucleotide sequence ID" value="NC_009266.1"/>
</dbReference>
<dbReference type="SMR" id="A4QJK4"/>
<dbReference type="GeneID" id="4962297"/>
<dbReference type="GO" id="GO:0009535">
    <property type="term" value="C:chloroplast thylakoid membrane"/>
    <property type="evidence" value="ECO:0007669"/>
    <property type="project" value="UniProtKB-SubCell"/>
</dbReference>
<dbReference type="GO" id="GO:0030964">
    <property type="term" value="C:NADH dehydrogenase complex"/>
    <property type="evidence" value="ECO:0007669"/>
    <property type="project" value="TreeGrafter"/>
</dbReference>
<dbReference type="GO" id="GO:0008137">
    <property type="term" value="F:NADH dehydrogenase (ubiquinone) activity"/>
    <property type="evidence" value="ECO:0007669"/>
    <property type="project" value="InterPro"/>
</dbReference>
<dbReference type="GO" id="GO:0048038">
    <property type="term" value="F:quinone binding"/>
    <property type="evidence" value="ECO:0007669"/>
    <property type="project" value="UniProtKB-KW"/>
</dbReference>
<dbReference type="GO" id="GO:0019684">
    <property type="term" value="P:photosynthesis, light reaction"/>
    <property type="evidence" value="ECO:0007669"/>
    <property type="project" value="UniProtKB-UniRule"/>
</dbReference>
<dbReference type="FunFam" id="1.20.58.1610:FF:000001">
    <property type="entry name" value="NAD(P)H-quinone oxidoreductase subunit 3, chloroplastic"/>
    <property type="match status" value="1"/>
</dbReference>
<dbReference type="Gene3D" id="1.20.58.1610">
    <property type="entry name" value="NADH:ubiquinone/plastoquinone oxidoreductase, chain 3"/>
    <property type="match status" value="1"/>
</dbReference>
<dbReference type="HAMAP" id="MF_01394">
    <property type="entry name" value="NDH1_NuoA"/>
    <property type="match status" value="1"/>
</dbReference>
<dbReference type="InterPro" id="IPR023043">
    <property type="entry name" value="NAD(P)H_OxRDtase_bac/plastid"/>
</dbReference>
<dbReference type="InterPro" id="IPR000440">
    <property type="entry name" value="NADH_UbQ/plastoQ_OxRdtase_su3"/>
</dbReference>
<dbReference type="InterPro" id="IPR038430">
    <property type="entry name" value="NDAH_ubi_oxred_su3_sf"/>
</dbReference>
<dbReference type="PANTHER" id="PTHR11058">
    <property type="entry name" value="NADH-UBIQUINONE OXIDOREDUCTASE CHAIN 3"/>
    <property type="match status" value="1"/>
</dbReference>
<dbReference type="PANTHER" id="PTHR11058:SF9">
    <property type="entry name" value="NADH-UBIQUINONE OXIDOREDUCTASE CHAIN 3"/>
    <property type="match status" value="1"/>
</dbReference>
<dbReference type="Pfam" id="PF00507">
    <property type="entry name" value="Oxidored_q4"/>
    <property type="match status" value="1"/>
</dbReference>
<comment type="function">
    <text evidence="1">NDH shuttles electrons from NAD(P)H:plastoquinone, via FMN and iron-sulfur (Fe-S) centers, to quinones in the photosynthetic chain and possibly in a chloroplast respiratory chain. The immediate electron acceptor for the enzyme in this species is believed to be plastoquinone. Couples the redox reaction to proton translocation, and thus conserves the redox energy in a proton gradient.</text>
</comment>
<comment type="catalytic activity">
    <reaction evidence="1">
        <text>a plastoquinone + NADH + (n+1) H(+)(in) = a plastoquinol + NAD(+) + n H(+)(out)</text>
        <dbReference type="Rhea" id="RHEA:42608"/>
        <dbReference type="Rhea" id="RHEA-COMP:9561"/>
        <dbReference type="Rhea" id="RHEA-COMP:9562"/>
        <dbReference type="ChEBI" id="CHEBI:15378"/>
        <dbReference type="ChEBI" id="CHEBI:17757"/>
        <dbReference type="ChEBI" id="CHEBI:57540"/>
        <dbReference type="ChEBI" id="CHEBI:57945"/>
        <dbReference type="ChEBI" id="CHEBI:62192"/>
    </reaction>
</comment>
<comment type="catalytic activity">
    <reaction evidence="1">
        <text>a plastoquinone + NADPH + (n+1) H(+)(in) = a plastoquinol + NADP(+) + n H(+)(out)</text>
        <dbReference type="Rhea" id="RHEA:42612"/>
        <dbReference type="Rhea" id="RHEA-COMP:9561"/>
        <dbReference type="Rhea" id="RHEA-COMP:9562"/>
        <dbReference type="ChEBI" id="CHEBI:15378"/>
        <dbReference type="ChEBI" id="CHEBI:17757"/>
        <dbReference type="ChEBI" id="CHEBI:57783"/>
        <dbReference type="ChEBI" id="CHEBI:58349"/>
        <dbReference type="ChEBI" id="CHEBI:62192"/>
    </reaction>
</comment>
<comment type="subunit">
    <text evidence="1">NDH is composed of at least 16 different subunits, 5 of which are encoded in the nucleus.</text>
</comment>
<comment type="subcellular location">
    <subcellularLocation>
        <location evidence="1">Plastid</location>
        <location evidence="1">Chloroplast thylakoid membrane</location>
        <topology evidence="1">Multi-pass membrane protein</topology>
    </subcellularLocation>
</comment>
<comment type="similarity">
    <text evidence="1">Belongs to the complex I subunit 3 family.</text>
</comment>
<geneLocation type="chloroplast"/>
<feature type="chain" id="PRO_0000362804" description="NAD(P)H-quinone oxidoreductase subunit 3, chloroplastic">
    <location>
        <begin position="1"/>
        <end position="120"/>
    </location>
</feature>
<feature type="transmembrane region" description="Helical" evidence="1">
    <location>
        <begin position="9"/>
        <end position="29"/>
    </location>
</feature>
<feature type="transmembrane region" description="Helical" evidence="1">
    <location>
        <begin position="64"/>
        <end position="84"/>
    </location>
</feature>
<feature type="transmembrane region" description="Helical" evidence="1">
    <location>
        <begin position="88"/>
        <end position="108"/>
    </location>
</feature>
<keyword id="KW-0150">Chloroplast</keyword>
<keyword id="KW-0472">Membrane</keyword>
<keyword id="KW-0520">NAD</keyword>
<keyword id="KW-0521">NADP</keyword>
<keyword id="KW-0934">Plastid</keyword>
<keyword id="KW-0618">Plastoquinone</keyword>
<keyword id="KW-0874">Quinone</keyword>
<keyword id="KW-0793">Thylakoid</keyword>
<keyword id="KW-1278">Translocase</keyword>
<keyword id="KW-0812">Transmembrane</keyword>
<keyword id="KW-1133">Transmembrane helix</keyword>
<keyword id="KW-0813">Transport</keyword>
<sequence length="120" mass="13873">MFLLYEYDIFWAFLIISSAIPFLAFLISGVLSPIRKGPEKLSSYESGIEPIGDAWLQFRIRYYMFALVFVVFDVETVFLYPWAMSFDVLGVSAFIEAFVFVLILILGLVYAWRKGALEWS</sequence>